<accession>D3YXJ0</accession>
<accession>A0A0B5JC35</accession>
<proteinExistence type="evidence at protein level"/>
<protein>
    <recommendedName>
        <fullName evidence="11">Diacylglycerol kinase eta</fullName>
        <shortName>DAG kinase eta</shortName>
        <ecNumber evidence="8">2.7.1.107</ecNumber>
    </recommendedName>
    <alternativeName>
        <fullName>Diglyceride kinase eta</fullName>
        <shortName>DGK-eta</shortName>
    </alternativeName>
</protein>
<name>DGKH_MOUSE</name>
<comment type="function">
    <text evidence="1 8 11">Diacylglycerol kinase that converts diacylglycerol/DAG into phosphatidic acid/phosphatidate/PA and regulates the respective levels of these two bioactive lipids (PubMed:27643686). Thereby, acts as a central switch between the signaling pathways activated by these second messengers with different cellular targets and opposite effects in numerous biological processes (Probable). Plays a key role in promoting cell growth. Activates the Ras/B-Raf/C-Raf/MEK/ERK signaling pathway induced by EGF. Regulates the recruitment of RAF1 and BRAF from cytoplasm to membranes and their heterodimerization (By similarity).</text>
</comment>
<comment type="catalytic activity">
    <reaction evidence="8">
        <text>a 1,2-diacyl-sn-glycerol + ATP = a 1,2-diacyl-sn-glycero-3-phosphate + ADP + H(+)</text>
        <dbReference type="Rhea" id="RHEA:10272"/>
        <dbReference type="ChEBI" id="CHEBI:15378"/>
        <dbReference type="ChEBI" id="CHEBI:17815"/>
        <dbReference type="ChEBI" id="CHEBI:30616"/>
        <dbReference type="ChEBI" id="CHEBI:58608"/>
        <dbReference type="ChEBI" id="CHEBI:456216"/>
        <dbReference type="EC" id="2.7.1.107"/>
    </reaction>
    <physiologicalReaction direction="left-to-right" evidence="12">
        <dbReference type="Rhea" id="RHEA:10273"/>
    </physiologicalReaction>
</comment>
<comment type="catalytic activity">
    <reaction evidence="8">
        <text>1,2-di-(9Z-octadecenoyl)-sn-glycerol + ATP = 1,2-di-(9Z-octadecenoyl)-sn-glycero-3-phosphate + ADP + H(+)</text>
        <dbReference type="Rhea" id="RHEA:40327"/>
        <dbReference type="ChEBI" id="CHEBI:15378"/>
        <dbReference type="ChEBI" id="CHEBI:30616"/>
        <dbReference type="ChEBI" id="CHEBI:52333"/>
        <dbReference type="ChEBI" id="CHEBI:74546"/>
        <dbReference type="ChEBI" id="CHEBI:456216"/>
    </reaction>
    <physiologicalReaction direction="left-to-right" evidence="12">
        <dbReference type="Rhea" id="RHEA:40328"/>
    </physiologicalReaction>
</comment>
<comment type="pathway">
    <text evidence="12">Lipid metabolism; glycerolipid metabolism.</text>
</comment>
<comment type="subunit">
    <text evidence="1">Interacts with RAF1 and BRAF.</text>
</comment>
<comment type="subunit">
    <molecule>Isoform 1</molecule>
    <text evidence="1">Homooligomers. Heterooligomers. Oligomerization through the SAM domain inhibits the diacylglycerol kinase activity. Heterooligomerizes with SAM domain-containing isoforms of DGKD.</text>
</comment>
<comment type="subunit">
    <molecule>Isoform 2</molecule>
    <text evidence="1">Does not form homooligomers.</text>
</comment>
<comment type="subcellular location">
    <subcellularLocation>
        <location evidence="8">Cytoplasm</location>
    </subcellularLocation>
    <subcellularLocation>
        <location evidence="8">Cell membrane</location>
    </subcellularLocation>
    <subcellularLocation>
        <location evidence="8">Cytoplasm</location>
        <location evidence="8">Cytoskeleton</location>
    </subcellularLocation>
    <text evidence="1">Translocated from the cytoplasm to endosomes in response to stress stimuli. Isoform 2 is rapidly relocated back to the cytoplasm upon removal of stress stimuli, whereas isoform 1 exhibits sustained endosomal association. Translocates from the cytoplasm to the cell membrane in the presence of active GTP-bound form of HRAS.</text>
</comment>
<comment type="alternative products">
    <event type="alternative splicing"/>
    <isoform>
        <id>D3YXJ0-1</id>
        <name>1</name>
        <name evidence="10">DAG kinase eta-2</name>
        <sequence type="displayed"/>
    </isoform>
    <isoform>
        <id>D3YXJ0-2</id>
        <name>2</name>
        <name evidence="10">DAG kinase eta-1</name>
        <sequence type="described" ref="VSP_060669 VSP_060670"/>
    </isoform>
    <isoform>
        <id>D3YXJ0-3</id>
        <name>3</name>
        <name evidence="9">DAG kinase eta-3</name>
        <sequence type="described" ref="VSP_060668 VSP_060669 VSP_060670"/>
    </isoform>
</comment>
<comment type="tissue specificity">
    <text evidence="7 8">Widely expressed (PubMed:27643686). Detected in the granulosa cells of the primary and secondary follicles (PubMed:25613821). Expressed in mature follicles and corpus lutea (PubMed:25613821). Expressed in the oviductal epithelium (PubMed:25613821). In the uterus, strongly expressed in the luminal epithelium (PubMed:25613821). Detected in the uterine glands (PubMed:25613821).</text>
</comment>
<comment type="tissue specificity">
    <molecule>Isoform 2</molecule>
    <text evidence="7">Detected in ovary and uterus (at protein level).</text>
</comment>
<comment type="tissue specificity">
    <molecule>Isoform 3</molecule>
    <text evidence="7 8">Specifically expressed in testis (PubMed:25613821, PubMed:27643686). Detected in the inner area of the testis (PubMed:25613821). Strongly expressed in the secondary spermatocytes and the round spermatids and weakly detected in the primary spermatocytes (PubMed:25613821).</text>
</comment>
<comment type="domain">
    <text evidence="1">The SAM domain mediates homooligomerization.</text>
</comment>
<comment type="PTM">
    <text evidence="1">Phosphorylated. Phosphorylation does not inhibit catalytic activity.</text>
</comment>
<comment type="similarity">
    <text evidence="11">Belongs to the eukaryotic diacylglycerol kinase family.</text>
</comment>
<evidence type="ECO:0000250" key="1">
    <source>
        <dbReference type="UniProtKB" id="Q86XP1"/>
    </source>
</evidence>
<evidence type="ECO:0000255" key="2">
    <source>
        <dbReference type="PROSITE-ProRule" id="PRU00145"/>
    </source>
</evidence>
<evidence type="ECO:0000255" key="3">
    <source>
        <dbReference type="PROSITE-ProRule" id="PRU00184"/>
    </source>
</evidence>
<evidence type="ECO:0000255" key="4">
    <source>
        <dbReference type="PROSITE-ProRule" id="PRU00226"/>
    </source>
</evidence>
<evidence type="ECO:0000255" key="5">
    <source>
        <dbReference type="PROSITE-ProRule" id="PRU00783"/>
    </source>
</evidence>
<evidence type="ECO:0000256" key="6">
    <source>
        <dbReference type="SAM" id="MobiDB-lite"/>
    </source>
</evidence>
<evidence type="ECO:0000269" key="7">
    <source>
    </source>
</evidence>
<evidence type="ECO:0000269" key="8">
    <source>
    </source>
</evidence>
<evidence type="ECO:0000303" key="9">
    <source>
    </source>
</evidence>
<evidence type="ECO:0000303" key="10">
    <source>
    </source>
</evidence>
<evidence type="ECO:0000305" key="11"/>
<evidence type="ECO:0000305" key="12">
    <source>
    </source>
</evidence>
<evidence type="ECO:0000312" key="13">
    <source>
        <dbReference type="MGI" id="MGI:2444188"/>
    </source>
</evidence>
<reference key="1">
    <citation type="journal article" date="2009" name="PLoS Biol.">
        <title>Lineage-specific biology revealed by a finished genome assembly of the mouse.</title>
        <authorList>
            <person name="Church D.M."/>
            <person name="Goodstadt L."/>
            <person name="Hillier L.W."/>
            <person name="Zody M.C."/>
            <person name="Goldstein S."/>
            <person name="She X."/>
            <person name="Bult C.J."/>
            <person name="Agarwala R."/>
            <person name="Cherry J.L."/>
            <person name="DiCuccio M."/>
            <person name="Hlavina W."/>
            <person name="Kapustin Y."/>
            <person name="Meric P."/>
            <person name="Maglott D."/>
            <person name="Birtle Z."/>
            <person name="Marques A.C."/>
            <person name="Graves T."/>
            <person name="Zhou S."/>
            <person name="Teague B."/>
            <person name="Potamousis K."/>
            <person name="Churas C."/>
            <person name="Place M."/>
            <person name="Herschleb J."/>
            <person name="Runnheim R."/>
            <person name="Forrest D."/>
            <person name="Amos-Landgraf J."/>
            <person name="Schwartz D.C."/>
            <person name="Cheng Z."/>
            <person name="Lindblad-Toh K."/>
            <person name="Eichler E.E."/>
            <person name="Ponting C.P."/>
        </authorList>
    </citation>
    <scope>NUCLEOTIDE SEQUENCE [LARGE SCALE GENOMIC DNA]</scope>
    <source>
        <strain>C57BL/6J</strain>
    </source>
</reference>
<reference key="2">
    <citation type="journal article" date="2015" name="BMC Dev. Biol.">
        <title>Distinct expression and localization of the type II diacylglycerol kinase isozymes delta, eta and kappa in the mouse reproductive organs.</title>
        <authorList>
            <person name="Shionoya T."/>
            <person name="Usuki T."/>
            <person name="Komenoi S."/>
            <person name="Isozaki T."/>
            <person name="Sakai H."/>
            <person name="Sakane F."/>
        </authorList>
    </citation>
    <scope>NUCLEOTIDE SEQUENCE [MRNA] OF 806-1133 (ISOFORM 3)</scope>
    <scope>TISSUE SPECIFICITY (ISOFORMS 2 AND 3)</scope>
    <source>
        <strain>C57BL/6N</strain>
    </source>
</reference>
<reference key="3">
    <citation type="journal article" date="2010" name="Cell">
        <title>A tissue-specific atlas of mouse protein phosphorylation and expression.</title>
        <authorList>
            <person name="Huttlin E.L."/>
            <person name="Jedrychowski M.P."/>
            <person name="Elias J.E."/>
            <person name="Goswami T."/>
            <person name="Rad R."/>
            <person name="Beausoleil S.A."/>
            <person name="Villen J."/>
            <person name="Haas W."/>
            <person name="Sowa M.E."/>
            <person name="Gygi S.P."/>
        </authorList>
    </citation>
    <scope>IDENTIFICATION BY MASS SPECTROMETRY [LARGE SCALE ANALYSIS]</scope>
</reference>
<reference key="4">
    <citation type="journal article" date="2016" name="PLoS ONE">
        <title>Cloning and Characterization of Novel Testis-Specific Diacylglycerol Kinase eta Splice Variants 3 and 4.</title>
        <authorList>
            <person name="Murakami E."/>
            <person name="Shionoya T."/>
            <person name="Komenoi S."/>
            <person name="Suzuki Y."/>
            <person name="Sakane F."/>
        </authorList>
    </citation>
    <scope>FUNCTION</scope>
    <scope>CATALYTIC ACTIVITY</scope>
    <scope>PATHWAY</scope>
    <scope>ALTERNATIVE SPLICING (ISOFORMS 1; 2 AND 3)</scope>
    <scope>TISSUE SPECIFICITY (ISOFORM 3)</scope>
    <scope>SUBCELLULAR LOCATION</scope>
</reference>
<sequence length="1211" mass="134132">MAGAGSQHHPQGVAGGAVAGASAVSPTAAGPGEDSSDSEAEQEGPQKLIRKVSTSGQMRTKTSIKEGQLLKQTSSFQRWKKRYFKLRGRTLYYAKDSKSLIFDEVDLSDASVAEASTKNANNSFTIITPFRRLMLCAENRKEMEVWISSLKSVQSREPYEVAQFNVEHFSGMHNWYACSHARPTFCNVCRESLSGVTSHGLSCEVCKFKAHKRCAVRATNNCKWTTLASIGKDIIEDEDGVAMPHQWLEGNLPVSAKCAVCDKTCGSVLRLQDWKCLWCKTMVHTACKDVYHPVCPLGQCKVSIIPPIALNSTDSDGFCRATFSFCVSPLLVFVNSKSGDNQGVKFLRRFKQLLNPAQVFDLMNGGPYLGLRLFQKFDNFRILVCGGDGSVGWVLSEIDKLNLHKQCQLGVLPLGTGNDLARVLGWGGSYDDDTQLPQILEKLERASTKMLDRWSIMTYELKLPAKSSLLPEPVAATEEFYMTIYEDSVANHLTKIVNSDEHAVVISSAKILCETVKDFVAKVEKAQDRTLENTVVAEAVASKCSVLNEKLEQLLQALHADSQASRVPPGIGPAIPEEDTVESASDESLGESKDQLVNDIGKPSSQKAVKPREIMLRANSLKKAVRQVIEEAEKVMDEPAVQPSEPVSPSCDYDTETDEAKEDDAKESLSAKTTSQSPDAQASCGHPQTDSVAGPAMATTKENLPVLNTRIICPGLRAGLAASIAGSSIINKMLLANIDPFGATPFIDPDLDSLDGYSEKCVMNNYFGIGLDAKISLEFNNKREEHPEKCRSRTKNLMWYGVLGTRELLQRSYKNLEQRVQLECDGQYIPLPSLQGIAVLNIPSYAGGTNFWGGTKEDDIFAAPSFDDKILEVVAVFDSVQMAVSRVIKLQHHRIAQCRTVKITIFGDEGVPVQVDGEAWVQPPGIIKIVHKNRAQMLTRDRAFESTLKSWEDKQKCDSGKPVLRTNLYIHPAPDLATEEVSQMRLCSQAAEELITRICDAATIHCLLEQELAHAVNACSHALNKANPRFPESLTRDTATEIAINVKALYNETEALLVGRVPLHLESPHEERVSSALHSVEMELQKLTEIPWLYYILRPSEDEEPPLDCTKRNNKSTVFRIVPKFKKEKAQKQKTSSQPVQNWGTEEVAAWLDLLNLGEYKEIFIRHDVRGAELLHLERRDLKDLGIPKVGHMKRILQGIKELERNPPNLV</sequence>
<dbReference type="EC" id="2.7.1.107" evidence="8"/>
<dbReference type="EMBL" id="AC124715">
    <property type="status" value="NOT_ANNOTATED_CDS"/>
    <property type="molecule type" value="Genomic_DNA"/>
</dbReference>
<dbReference type="EMBL" id="AC126251">
    <property type="status" value="NOT_ANNOTATED_CDS"/>
    <property type="molecule type" value="Genomic_DNA"/>
</dbReference>
<dbReference type="EMBL" id="AC161608">
    <property type="status" value="NOT_ANNOTATED_CDS"/>
    <property type="molecule type" value="Genomic_DNA"/>
</dbReference>
<dbReference type="EMBL" id="KP329574">
    <property type="protein sequence ID" value="AJF98606.1"/>
    <property type="molecule type" value="mRNA"/>
</dbReference>
<dbReference type="RefSeq" id="NP_001074805.1">
    <property type="nucleotide sequence ID" value="NM_001081336.1"/>
</dbReference>
<dbReference type="SMR" id="D3YXJ0"/>
<dbReference type="FunCoup" id="D3YXJ0">
    <property type="interactions" value="832"/>
</dbReference>
<dbReference type="GlyGen" id="D3YXJ0">
    <property type="glycosylation" value="2 sites, 1 O-linked glycan (1 site)"/>
</dbReference>
<dbReference type="iPTMnet" id="D3YXJ0"/>
<dbReference type="PhosphoSitePlus" id="D3YXJ0"/>
<dbReference type="ProteomicsDB" id="331287">
    <molecule id="D3YXJ0-1"/>
</dbReference>
<dbReference type="Pumba" id="D3YXJ0"/>
<dbReference type="Antibodypedia" id="23454">
    <property type="antibodies" value="125 antibodies from 26 providers"/>
</dbReference>
<dbReference type="Ensembl" id="ENSMUST00000074729.6">
    <molecule id="D3YXJ0-2"/>
    <property type="protein sequence ID" value="ENSMUSP00000074290.6"/>
    <property type="gene ID" value="ENSMUSG00000034731.12"/>
</dbReference>
<dbReference type="GeneID" id="380921"/>
<dbReference type="KEGG" id="mmu:380921"/>
<dbReference type="UCSC" id="uc007uso.1">
    <molecule id="D3YXJ0-1"/>
    <property type="organism name" value="mouse"/>
</dbReference>
<dbReference type="AGR" id="MGI:2444188"/>
<dbReference type="CTD" id="160851"/>
<dbReference type="MGI" id="MGI:2444188">
    <property type="gene designation" value="Dgkh"/>
</dbReference>
<dbReference type="VEuPathDB" id="HostDB:ENSMUSG00000034731"/>
<dbReference type="eggNOG" id="KOG1170">
    <property type="taxonomic scope" value="Eukaryota"/>
</dbReference>
<dbReference type="GeneTree" id="ENSGT00940000158106"/>
<dbReference type="HOGENOM" id="CLU_001799_3_0_1"/>
<dbReference type="InParanoid" id="D3YXJ0"/>
<dbReference type="OMA" id="KLADWRC"/>
<dbReference type="PhylomeDB" id="D3YXJ0"/>
<dbReference type="TreeFam" id="TF313104"/>
<dbReference type="Reactome" id="R-MMU-114508">
    <property type="pathway name" value="Effects of PIP2 hydrolysis"/>
</dbReference>
<dbReference type="UniPathway" id="UPA00230"/>
<dbReference type="BioGRID-ORCS" id="380921">
    <property type="hits" value="1 hit in 79 CRISPR screens"/>
</dbReference>
<dbReference type="ChiTaRS" id="Dgkh">
    <property type="organism name" value="mouse"/>
</dbReference>
<dbReference type="PRO" id="PR:D3YXJ0"/>
<dbReference type="Proteomes" id="UP000000589">
    <property type="component" value="Chromosome 14"/>
</dbReference>
<dbReference type="RNAct" id="D3YXJ0">
    <property type="molecule type" value="protein"/>
</dbReference>
<dbReference type="Bgee" id="ENSMUSG00000034731">
    <property type="expression patterns" value="Expressed in dorsal root ganglion and 208 other cell types or tissues"/>
</dbReference>
<dbReference type="ExpressionAtlas" id="D3YXJ0">
    <property type="expression patterns" value="baseline and differential"/>
</dbReference>
<dbReference type="GO" id="GO:0015629">
    <property type="term" value="C:actin cytoskeleton"/>
    <property type="evidence" value="ECO:0000314"/>
    <property type="project" value="UniProtKB"/>
</dbReference>
<dbReference type="GO" id="GO:0005737">
    <property type="term" value="C:cytoplasm"/>
    <property type="evidence" value="ECO:0000314"/>
    <property type="project" value="UniProtKB"/>
</dbReference>
<dbReference type="GO" id="GO:0005768">
    <property type="term" value="C:endosome"/>
    <property type="evidence" value="ECO:0000266"/>
    <property type="project" value="MGI"/>
</dbReference>
<dbReference type="GO" id="GO:0005886">
    <property type="term" value="C:plasma membrane"/>
    <property type="evidence" value="ECO:0000314"/>
    <property type="project" value="UniProtKB"/>
</dbReference>
<dbReference type="GO" id="GO:0005524">
    <property type="term" value="F:ATP binding"/>
    <property type="evidence" value="ECO:0007669"/>
    <property type="project" value="UniProtKB-KW"/>
</dbReference>
<dbReference type="GO" id="GO:0004143">
    <property type="term" value="F:ATP-dependent diacylglycerol kinase activity"/>
    <property type="evidence" value="ECO:0000314"/>
    <property type="project" value="UniProtKB"/>
</dbReference>
<dbReference type="GO" id="GO:0042803">
    <property type="term" value="F:protein homodimerization activity"/>
    <property type="evidence" value="ECO:0000266"/>
    <property type="project" value="MGI"/>
</dbReference>
<dbReference type="GO" id="GO:0008270">
    <property type="term" value="F:zinc ion binding"/>
    <property type="evidence" value="ECO:0007669"/>
    <property type="project" value="UniProtKB-KW"/>
</dbReference>
<dbReference type="GO" id="GO:0046339">
    <property type="term" value="P:diacylglycerol metabolic process"/>
    <property type="evidence" value="ECO:0000314"/>
    <property type="project" value="UniProtKB"/>
</dbReference>
<dbReference type="GO" id="GO:0046834">
    <property type="term" value="P:lipid phosphorylation"/>
    <property type="evidence" value="ECO:0000314"/>
    <property type="project" value="UniProtKB"/>
</dbReference>
<dbReference type="GO" id="GO:0006654">
    <property type="term" value="P:phosphatidic acid biosynthetic process"/>
    <property type="evidence" value="ECO:0000314"/>
    <property type="project" value="UniProtKB"/>
</dbReference>
<dbReference type="GO" id="GO:0007200">
    <property type="term" value="P:phospholipase C-activating G protein-coupled receptor signaling pathway"/>
    <property type="evidence" value="ECO:0007669"/>
    <property type="project" value="InterPro"/>
</dbReference>
<dbReference type="CDD" id="cd20848">
    <property type="entry name" value="C1_DGKeta_rpt1"/>
    <property type="match status" value="1"/>
</dbReference>
<dbReference type="CDD" id="cd20894">
    <property type="entry name" value="C1_DGKeta_rpt2"/>
    <property type="match status" value="1"/>
</dbReference>
<dbReference type="CDD" id="cd13274">
    <property type="entry name" value="PH_DGK_type2"/>
    <property type="match status" value="1"/>
</dbReference>
<dbReference type="CDD" id="cd09576">
    <property type="entry name" value="SAM_DGK-eta"/>
    <property type="match status" value="1"/>
</dbReference>
<dbReference type="FunFam" id="1.10.150.50:FF:000021">
    <property type="entry name" value="Diacylglycerol kinase"/>
    <property type="match status" value="1"/>
</dbReference>
<dbReference type="FunFam" id="2.30.29.30:FF:000060">
    <property type="entry name" value="Diacylglycerol kinase"/>
    <property type="match status" value="1"/>
</dbReference>
<dbReference type="FunFam" id="2.60.200.40:FF:000001">
    <property type="entry name" value="Diacylglycerol kinase"/>
    <property type="match status" value="1"/>
</dbReference>
<dbReference type="FunFam" id="3.30.60.20:FF:000002">
    <property type="entry name" value="Diacylglycerol kinase"/>
    <property type="match status" value="1"/>
</dbReference>
<dbReference type="FunFam" id="3.30.60.20:FF:000029">
    <property type="entry name" value="Diacylglycerol kinase"/>
    <property type="match status" value="1"/>
</dbReference>
<dbReference type="FunFam" id="3.40.50.10330:FF:000001">
    <property type="entry name" value="Diacylglycerol kinase"/>
    <property type="match status" value="1"/>
</dbReference>
<dbReference type="Gene3D" id="2.60.200.40">
    <property type="match status" value="1"/>
</dbReference>
<dbReference type="Gene3D" id="3.30.60.20">
    <property type="match status" value="2"/>
</dbReference>
<dbReference type="Gene3D" id="2.30.29.30">
    <property type="entry name" value="Pleckstrin-homology domain (PH domain)/Phosphotyrosine-binding domain (PTB)"/>
    <property type="match status" value="1"/>
</dbReference>
<dbReference type="Gene3D" id="3.40.50.10330">
    <property type="entry name" value="Probable inorganic polyphosphate/atp-NAD kinase, domain 1"/>
    <property type="match status" value="1"/>
</dbReference>
<dbReference type="Gene3D" id="1.10.150.50">
    <property type="entry name" value="Transcription Factor, Ets-1"/>
    <property type="match status" value="1"/>
</dbReference>
<dbReference type="InterPro" id="IPR017438">
    <property type="entry name" value="ATP-NAD_kinase_N"/>
</dbReference>
<dbReference type="InterPro" id="IPR046349">
    <property type="entry name" value="C1-like_sf"/>
</dbReference>
<dbReference type="InterPro" id="IPR047480">
    <property type="entry name" value="C1_DGKeta_rpt2"/>
</dbReference>
<dbReference type="InterPro" id="IPR037607">
    <property type="entry name" value="DGK"/>
</dbReference>
<dbReference type="InterPro" id="IPR054474">
    <property type="entry name" value="DGKD_4H"/>
</dbReference>
<dbReference type="InterPro" id="IPR000756">
    <property type="entry name" value="Diacylglycerol_kin_accessory"/>
</dbReference>
<dbReference type="InterPro" id="IPR001206">
    <property type="entry name" value="Diacylglycerol_kinase_cat_dom"/>
</dbReference>
<dbReference type="InterPro" id="IPR016064">
    <property type="entry name" value="NAD/diacylglycerol_kinase_sf"/>
</dbReference>
<dbReference type="InterPro" id="IPR002219">
    <property type="entry name" value="PE/DAG-bd"/>
</dbReference>
<dbReference type="InterPro" id="IPR011993">
    <property type="entry name" value="PH-like_dom_sf"/>
</dbReference>
<dbReference type="InterPro" id="IPR001849">
    <property type="entry name" value="PH_domain"/>
</dbReference>
<dbReference type="InterPro" id="IPR001660">
    <property type="entry name" value="SAM"/>
</dbReference>
<dbReference type="InterPro" id="IPR013761">
    <property type="entry name" value="SAM/pointed_sf"/>
</dbReference>
<dbReference type="PANTHER" id="PTHR11255">
    <property type="entry name" value="DIACYLGLYCEROL KINASE"/>
    <property type="match status" value="1"/>
</dbReference>
<dbReference type="PANTHER" id="PTHR11255:SF37">
    <property type="entry name" value="DIACYLGLYCEROL KINASE ETA"/>
    <property type="match status" value="1"/>
</dbReference>
<dbReference type="Pfam" id="PF00130">
    <property type="entry name" value="C1_1"/>
    <property type="match status" value="2"/>
</dbReference>
<dbReference type="Pfam" id="PF00609">
    <property type="entry name" value="DAGK_acc"/>
    <property type="match status" value="1"/>
</dbReference>
<dbReference type="Pfam" id="PF00781">
    <property type="entry name" value="DAGK_cat"/>
    <property type="match status" value="1"/>
</dbReference>
<dbReference type="Pfam" id="PF22944">
    <property type="entry name" value="DGKD_4H"/>
    <property type="match status" value="1"/>
</dbReference>
<dbReference type="Pfam" id="PF00169">
    <property type="entry name" value="PH"/>
    <property type="match status" value="1"/>
</dbReference>
<dbReference type="Pfam" id="PF07647">
    <property type="entry name" value="SAM_2"/>
    <property type="match status" value="1"/>
</dbReference>
<dbReference type="SMART" id="SM00109">
    <property type="entry name" value="C1"/>
    <property type="match status" value="2"/>
</dbReference>
<dbReference type="SMART" id="SM00045">
    <property type="entry name" value="DAGKa"/>
    <property type="match status" value="1"/>
</dbReference>
<dbReference type="SMART" id="SM00046">
    <property type="entry name" value="DAGKc"/>
    <property type="match status" value="1"/>
</dbReference>
<dbReference type="SMART" id="SM00233">
    <property type="entry name" value="PH"/>
    <property type="match status" value="1"/>
</dbReference>
<dbReference type="SMART" id="SM00454">
    <property type="entry name" value="SAM"/>
    <property type="match status" value="1"/>
</dbReference>
<dbReference type="SUPFAM" id="SSF57889">
    <property type="entry name" value="Cysteine-rich domain"/>
    <property type="match status" value="2"/>
</dbReference>
<dbReference type="SUPFAM" id="SSF111331">
    <property type="entry name" value="NAD kinase/diacylglycerol kinase-like"/>
    <property type="match status" value="1"/>
</dbReference>
<dbReference type="SUPFAM" id="SSF50729">
    <property type="entry name" value="PH domain-like"/>
    <property type="match status" value="1"/>
</dbReference>
<dbReference type="SUPFAM" id="SSF47769">
    <property type="entry name" value="SAM/Pointed domain"/>
    <property type="match status" value="1"/>
</dbReference>
<dbReference type="PROSITE" id="PS50146">
    <property type="entry name" value="DAGK"/>
    <property type="match status" value="1"/>
</dbReference>
<dbReference type="PROSITE" id="PS50003">
    <property type="entry name" value="PH_DOMAIN"/>
    <property type="match status" value="1"/>
</dbReference>
<dbReference type="PROSITE" id="PS50105">
    <property type="entry name" value="SAM_DOMAIN"/>
    <property type="match status" value="1"/>
</dbReference>
<dbReference type="PROSITE" id="PS00479">
    <property type="entry name" value="ZF_DAG_PE_1"/>
    <property type="match status" value="2"/>
</dbReference>
<dbReference type="PROSITE" id="PS50081">
    <property type="entry name" value="ZF_DAG_PE_2"/>
    <property type="match status" value="2"/>
</dbReference>
<gene>
    <name evidence="13" type="primary">Dgkh</name>
</gene>
<feature type="chain" id="PRO_0000450665" description="Diacylglycerol kinase eta">
    <location>
        <begin position="1"/>
        <end position="1211"/>
    </location>
</feature>
<feature type="domain" description="PH" evidence="2">
    <location>
        <begin position="62"/>
        <end position="155"/>
    </location>
</feature>
<feature type="domain" description="DAGKc" evidence="5">
    <location>
        <begin position="325"/>
        <end position="460"/>
    </location>
</feature>
<feature type="domain" description="SAM" evidence="3">
    <location>
        <begin position="1143"/>
        <end position="1206"/>
    </location>
</feature>
<feature type="zinc finger region" description="Phorbol-ester/DAG-type 1" evidence="4">
    <location>
        <begin position="172"/>
        <end position="222"/>
    </location>
</feature>
<feature type="zinc finger region" description="Phorbol-ester/DAG-type 2" evidence="4">
    <location>
        <begin position="244"/>
        <end position="295"/>
    </location>
</feature>
<feature type="region of interest" description="Disordered" evidence="6">
    <location>
        <begin position="1"/>
        <end position="66"/>
    </location>
</feature>
<feature type="region of interest" description="Disordered" evidence="6">
    <location>
        <begin position="562"/>
        <end position="613"/>
    </location>
</feature>
<feature type="region of interest" description="Disordered" evidence="6">
    <location>
        <begin position="634"/>
        <end position="694"/>
    </location>
</feature>
<feature type="compositionally biased region" description="Low complexity" evidence="6">
    <location>
        <begin position="19"/>
        <end position="32"/>
    </location>
</feature>
<feature type="compositionally biased region" description="Polar residues" evidence="6">
    <location>
        <begin position="52"/>
        <end position="61"/>
    </location>
</feature>
<feature type="compositionally biased region" description="Acidic residues" evidence="6">
    <location>
        <begin position="576"/>
        <end position="589"/>
    </location>
</feature>
<feature type="compositionally biased region" description="Acidic residues" evidence="6">
    <location>
        <begin position="653"/>
        <end position="662"/>
    </location>
</feature>
<feature type="compositionally biased region" description="Polar residues" evidence="6">
    <location>
        <begin position="670"/>
        <end position="691"/>
    </location>
</feature>
<feature type="splice variant" id="VSP_060668" description="In isoform 3.">
    <location>
        <begin position="1033"/>
        <end position="1063"/>
    </location>
</feature>
<feature type="splice variant" id="VSP_060669" description="In isoform 2 and isoform 3.">
    <original>VQNWGTEEVAAWLDLLN</original>
    <variation>GPGDSESGSYEANSPGN</variation>
    <location>
        <begin position="1140"/>
        <end position="1156"/>
    </location>
</feature>
<feature type="splice variant" id="VSP_060670" description="In isoform 2 and isoform 3.">
    <location>
        <begin position="1157"/>
        <end position="1211"/>
    </location>
</feature>
<organism>
    <name type="scientific">Mus musculus</name>
    <name type="common">Mouse</name>
    <dbReference type="NCBI Taxonomy" id="10090"/>
    <lineage>
        <taxon>Eukaryota</taxon>
        <taxon>Metazoa</taxon>
        <taxon>Chordata</taxon>
        <taxon>Craniata</taxon>
        <taxon>Vertebrata</taxon>
        <taxon>Euteleostomi</taxon>
        <taxon>Mammalia</taxon>
        <taxon>Eutheria</taxon>
        <taxon>Euarchontoglires</taxon>
        <taxon>Glires</taxon>
        <taxon>Rodentia</taxon>
        <taxon>Myomorpha</taxon>
        <taxon>Muroidea</taxon>
        <taxon>Muridae</taxon>
        <taxon>Murinae</taxon>
        <taxon>Mus</taxon>
        <taxon>Mus</taxon>
    </lineage>
</organism>
<keyword id="KW-0025">Alternative splicing</keyword>
<keyword id="KW-0067">ATP-binding</keyword>
<keyword id="KW-1003">Cell membrane</keyword>
<keyword id="KW-0963">Cytoplasm</keyword>
<keyword id="KW-0206">Cytoskeleton</keyword>
<keyword id="KW-0418">Kinase</keyword>
<keyword id="KW-0443">Lipid metabolism</keyword>
<keyword id="KW-0472">Membrane</keyword>
<keyword id="KW-0479">Metal-binding</keyword>
<keyword id="KW-0547">Nucleotide-binding</keyword>
<keyword id="KW-0597">Phosphoprotein</keyword>
<keyword id="KW-1185">Reference proteome</keyword>
<keyword id="KW-0677">Repeat</keyword>
<keyword id="KW-0808">Transferase</keyword>
<keyword id="KW-0862">Zinc</keyword>
<keyword id="KW-0863">Zinc-finger</keyword>